<protein>
    <recommendedName>
        <fullName>Periviscerokinin-2.1</fullName>
    </recommendedName>
    <alternativeName>
        <fullName>Pea-PVK-2-like peptide</fullName>
    </alternativeName>
    <alternativeName>
        <fullName>Periviscerokinin-3</fullName>
        <shortName>PerAu-PVK-3</shortName>
    </alternativeName>
</protein>
<feature type="peptide" id="PRO_0000044270" description="Periviscerokinin-2.1">
    <location>
        <begin position="1"/>
        <end position="12"/>
    </location>
</feature>
<feature type="modified residue" description="Valine amide" evidence="2 3">
    <location>
        <position position="12"/>
    </location>
</feature>
<name>PVK21_PERAU</name>
<sequence>GSSSGLISMPRV</sequence>
<keyword id="KW-0027">Amidation</keyword>
<keyword id="KW-0903">Direct protein sequencing</keyword>
<keyword id="KW-0527">Neuropeptide</keyword>
<keyword id="KW-0964">Secreted</keyword>
<dbReference type="GO" id="GO:0005576">
    <property type="term" value="C:extracellular region"/>
    <property type="evidence" value="ECO:0007669"/>
    <property type="project" value="UniProtKB-SubCell"/>
</dbReference>
<dbReference type="GO" id="GO:0007218">
    <property type="term" value="P:neuropeptide signaling pathway"/>
    <property type="evidence" value="ECO:0007669"/>
    <property type="project" value="UniProtKB-KW"/>
</dbReference>
<dbReference type="InterPro" id="IPR013231">
    <property type="entry name" value="Periviscerokinin"/>
</dbReference>
<dbReference type="Pfam" id="PF08259">
    <property type="entry name" value="Periviscerokin"/>
    <property type="match status" value="1"/>
</dbReference>
<organism>
    <name type="scientific">Periplaneta australasiae</name>
    <name type="common">Australian cockroach</name>
    <name type="synonym">Blatta australasiae</name>
    <dbReference type="NCBI Taxonomy" id="36975"/>
    <lineage>
        <taxon>Eukaryota</taxon>
        <taxon>Metazoa</taxon>
        <taxon>Ecdysozoa</taxon>
        <taxon>Arthropoda</taxon>
        <taxon>Hexapoda</taxon>
        <taxon>Insecta</taxon>
        <taxon>Pterygota</taxon>
        <taxon>Neoptera</taxon>
        <taxon>Polyneoptera</taxon>
        <taxon>Dictyoptera</taxon>
        <taxon>Blattodea</taxon>
        <taxon>Blattoidea</taxon>
        <taxon>Blattidae</taxon>
        <taxon>Blattinae</taxon>
        <taxon>Periplaneta</taxon>
    </lineage>
</organism>
<accession>P84436</accession>
<evidence type="ECO:0000255" key="1"/>
<evidence type="ECO:0000269" key="2">
    <source>
    </source>
</evidence>
<evidence type="ECO:0000269" key="3">
    <source>
    </source>
</evidence>
<evidence type="ECO:0000305" key="4"/>
<comment type="function">
    <text evidence="4">Mediates visceral muscle contractile activity (myotropic activity).</text>
</comment>
<comment type="subcellular location">
    <subcellularLocation>
        <location evidence="4">Secreted</location>
    </subcellularLocation>
</comment>
<comment type="mass spectrometry"/>
<comment type="similarity">
    <text evidence="1">Belongs to the periviscerokinin family.</text>
</comment>
<reference evidence="4" key="1">
    <citation type="journal article" date="2005" name="Peptides">
        <title>Peptidomics of neurohemal organs from species of the cockroach family Blattidae: how do neuropeptides of closely related species differ?</title>
        <authorList>
            <person name="Predel R."/>
            <person name="Gaede G."/>
        </authorList>
    </citation>
    <scope>PROTEIN SEQUENCE</scope>
    <scope>MASS SPECTROMETRY</scope>
    <scope>AMIDATION AT VAL-12</scope>
    <source>
        <tissue evidence="2">Abdominal perisympathetic organs</tissue>
    </source>
</reference>
<reference key="2">
    <citation type="journal article" date="2009" name="BMC Evol. Biol.">
        <title>A proteomic approach for studying insect phylogeny: CAPA peptides of ancient insect taxa (Dictyoptera, Blattoptera) as a test case.</title>
        <authorList>
            <person name="Roth S."/>
            <person name="Fromm B."/>
            <person name="Gaede G."/>
            <person name="Predel R."/>
        </authorList>
    </citation>
    <scope>PROTEIN SEQUENCE</scope>
    <scope>AMIDATION AT VAL-12</scope>
    <source>
        <tissue>Abdominal perisympathetic organs</tissue>
    </source>
</reference>
<proteinExistence type="evidence at protein level"/>